<comment type="function">
    <text evidence="1">This is one of the proteins that binds to the 5S RNA in the ribosome where it forms part of the central protuberance.</text>
</comment>
<comment type="subunit">
    <text evidence="1">Part of the 50S ribosomal subunit; part of the 5S rRNA/L5/L18/L25 subcomplex. Contacts the 5S rRNA. Binds to the 5S rRNA independently of L5 and L18.</text>
</comment>
<comment type="similarity">
    <text evidence="1">Belongs to the bacterial ribosomal protein bL25 family. CTC subfamily.</text>
</comment>
<feature type="chain" id="PRO_1000166174" description="Large ribosomal subunit protein bL25">
    <location>
        <begin position="1"/>
        <end position="185"/>
    </location>
</feature>
<protein>
    <recommendedName>
        <fullName evidence="1">Large ribosomal subunit protein bL25</fullName>
    </recommendedName>
    <alternativeName>
        <fullName evidence="2">50S ribosomal protein L25</fullName>
    </alternativeName>
    <alternativeName>
        <fullName evidence="1">General stress protein CTC</fullName>
    </alternativeName>
</protein>
<accession>C1DBA9</accession>
<evidence type="ECO:0000255" key="1">
    <source>
        <dbReference type="HAMAP-Rule" id="MF_01334"/>
    </source>
</evidence>
<evidence type="ECO:0000305" key="2"/>
<dbReference type="EMBL" id="CP001154">
    <property type="protein sequence ID" value="ACO73306.1"/>
    <property type="molecule type" value="Genomic_DNA"/>
</dbReference>
<dbReference type="RefSeq" id="WP_012695800.1">
    <property type="nucleotide sequence ID" value="NC_012559.1"/>
</dbReference>
<dbReference type="SMR" id="C1DBA9"/>
<dbReference type="STRING" id="557598.LHK_00311"/>
<dbReference type="KEGG" id="lhk:LHK_00311"/>
<dbReference type="eggNOG" id="COG1825">
    <property type="taxonomic scope" value="Bacteria"/>
</dbReference>
<dbReference type="HOGENOM" id="CLU_075939_0_1_4"/>
<dbReference type="Proteomes" id="UP000002010">
    <property type="component" value="Chromosome"/>
</dbReference>
<dbReference type="GO" id="GO:0022625">
    <property type="term" value="C:cytosolic large ribosomal subunit"/>
    <property type="evidence" value="ECO:0007669"/>
    <property type="project" value="TreeGrafter"/>
</dbReference>
<dbReference type="GO" id="GO:0008097">
    <property type="term" value="F:5S rRNA binding"/>
    <property type="evidence" value="ECO:0007669"/>
    <property type="project" value="InterPro"/>
</dbReference>
<dbReference type="GO" id="GO:0003735">
    <property type="term" value="F:structural constituent of ribosome"/>
    <property type="evidence" value="ECO:0007669"/>
    <property type="project" value="InterPro"/>
</dbReference>
<dbReference type="GO" id="GO:0006412">
    <property type="term" value="P:translation"/>
    <property type="evidence" value="ECO:0007669"/>
    <property type="project" value="UniProtKB-UniRule"/>
</dbReference>
<dbReference type="CDD" id="cd00495">
    <property type="entry name" value="Ribosomal_L25_TL5_CTC"/>
    <property type="match status" value="1"/>
</dbReference>
<dbReference type="FunFam" id="2.40.240.10:FF:000002">
    <property type="entry name" value="50S ribosomal protein L25"/>
    <property type="match status" value="1"/>
</dbReference>
<dbReference type="Gene3D" id="2.170.120.20">
    <property type="entry name" value="Ribosomal protein L25, beta domain"/>
    <property type="match status" value="1"/>
</dbReference>
<dbReference type="Gene3D" id="2.40.240.10">
    <property type="entry name" value="Ribosomal Protein L25, Chain P"/>
    <property type="match status" value="1"/>
</dbReference>
<dbReference type="HAMAP" id="MF_01336">
    <property type="entry name" value="Ribosomal_bL25"/>
    <property type="match status" value="1"/>
</dbReference>
<dbReference type="HAMAP" id="MF_01334">
    <property type="entry name" value="Ribosomal_bL25_CTC"/>
    <property type="match status" value="1"/>
</dbReference>
<dbReference type="InterPro" id="IPR020056">
    <property type="entry name" value="Rbsml_bL25/Gln-tRNA_synth_N"/>
</dbReference>
<dbReference type="InterPro" id="IPR011035">
    <property type="entry name" value="Ribosomal_bL25/Gln-tRNA_synth"/>
</dbReference>
<dbReference type="InterPro" id="IPR020057">
    <property type="entry name" value="Ribosomal_bL25_b-dom"/>
</dbReference>
<dbReference type="InterPro" id="IPR037121">
    <property type="entry name" value="Ribosomal_bL25_C"/>
</dbReference>
<dbReference type="InterPro" id="IPR001021">
    <property type="entry name" value="Ribosomal_bL25_long"/>
</dbReference>
<dbReference type="InterPro" id="IPR020055">
    <property type="entry name" value="Ribosomal_bL25_short"/>
</dbReference>
<dbReference type="InterPro" id="IPR029751">
    <property type="entry name" value="Ribosomal_L25_dom"/>
</dbReference>
<dbReference type="InterPro" id="IPR020930">
    <property type="entry name" value="Ribosomal_uL5_bac-type"/>
</dbReference>
<dbReference type="NCBIfam" id="TIGR00731">
    <property type="entry name" value="bL25_bact_ctc"/>
    <property type="match status" value="1"/>
</dbReference>
<dbReference type="NCBIfam" id="NF004130">
    <property type="entry name" value="PRK05618.1-5"/>
    <property type="match status" value="1"/>
</dbReference>
<dbReference type="NCBIfam" id="NF004612">
    <property type="entry name" value="PRK05943.1"/>
    <property type="match status" value="1"/>
</dbReference>
<dbReference type="PANTHER" id="PTHR33284">
    <property type="entry name" value="RIBOSOMAL PROTEIN L25/GLN-TRNA SYNTHETASE, ANTI-CODON-BINDING DOMAIN-CONTAINING PROTEIN"/>
    <property type="match status" value="1"/>
</dbReference>
<dbReference type="PANTHER" id="PTHR33284:SF1">
    <property type="entry name" value="RIBOSOMAL PROTEIN L25_GLN-TRNA SYNTHETASE, ANTI-CODON-BINDING DOMAIN-CONTAINING PROTEIN"/>
    <property type="match status" value="1"/>
</dbReference>
<dbReference type="Pfam" id="PF01386">
    <property type="entry name" value="Ribosomal_L25p"/>
    <property type="match status" value="1"/>
</dbReference>
<dbReference type="Pfam" id="PF14693">
    <property type="entry name" value="Ribosomal_TL5_C"/>
    <property type="match status" value="1"/>
</dbReference>
<dbReference type="SUPFAM" id="SSF50715">
    <property type="entry name" value="Ribosomal protein L25-like"/>
    <property type="match status" value="1"/>
</dbReference>
<keyword id="KW-1185">Reference proteome</keyword>
<keyword id="KW-0687">Ribonucleoprotein</keyword>
<keyword id="KW-0689">Ribosomal protein</keyword>
<keyword id="KW-0694">RNA-binding</keyword>
<keyword id="KW-0699">rRNA-binding</keyword>
<organism>
    <name type="scientific">Laribacter hongkongensis (strain HLHK9)</name>
    <dbReference type="NCBI Taxonomy" id="557598"/>
    <lineage>
        <taxon>Bacteria</taxon>
        <taxon>Pseudomonadati</taxon>
        <taxon>Pseudomonadota</taxon>
        <taxon>Betaproteobacteria</taxon>
        <taxon>Neisseriales</taxon>
        <taxon>Aquaspirillaceae</taxon>
        <taxon>Laribacter</taxon>
    </lineage>
</organism>
<gene>
    <name evidence="1" type="primary">rplY</name>
    <name evidence="1" type="synonym">ctc</name>
    <name type="ordered locus">LHK_00311</name>
</gene>
<name>RL25_LARHH</name>
<sequence>MTIEIQAQQRADQGSSASRRLRRAGVVPGVVYGAGKAAVAISFDHNTLYYALQKEGFHSSILNLVIDGATEQVFVRDVQMHAFKPQVQHIDFQRVDANTVIEAKVPFKFINGEISPAVKMNGKIIGHLLNAAVVRCLPANLPAAIEVDLSTLVAGESVHLSSIKLPEGVEFASLRSGKDLSVARA</sequence>
<proteinExistence type="inferred from homology"/>
<reference key="1">
    <citation type="journal article" date="2009" name="PLoS Genet.">
        <title>The complete genome and proteome of Laribacter hongkongensis reveal potential mechanisms for adaptations to different temperatures and habitats.</title>
        <authorList>
            <person name="Woo P.C.Y."/>
            <person name="Lau S.K.P."/>
            <person name="Tse H."/>
            <person name="Teng J.L.L."/>
            <person name="Curreem S.O."/>
            <person name="Tsang A.K.L."/>
            <person name="Fan R.Y.Y."/>
            <person name="Wong G.K.M."/>
            <person name="Huang Y."/>
            <person name="Loman N.J."/>
            <person name="Snyder L.A.S."/>
            <person name="Cai J.J."/>
            <person name="Huang J.-D."/>
            <person name="Mak W."/>
            <person name="Pallen M.J."/>
            <person name="Lok S."/>
            <person name="Yuen K.-Y."/>
        </authorList>
    </citation>
    <scope>NUCLEOTIDE SEQUENCE [LARGE SCALE GENOMIC DNA]</scope>
    <source>
        <strain>HLHK9</strain>
    </source>
</reference>